<keyword id="KW-0067">ATP-binding</keyword>
<keyword id="KW-0963">Cytoplasm</keyword>
<keyword id="KW-0456">Lyase</keyword>
<keyword id="KW-0520">NAD</keyword>
<keyword id="KW-0521">NADP</keyword>
<keyword id="KW-0547">Nucleotide-binding</keyword>
<keyword id="KW-0597">Phosphoprotein</keyword>
<keyword id="KW-1185">Reference proteome</keyword>
<comment type="function">
    <text evidence="1">Catalyzes the dehydration of the S-form of NAD(P)HX at the expense of ATP, which is converted to ADP. Together with NAD(P)HX epimerase, which catalyzes the epimerization of the S- and R-forms, the enzyme allows the repair of both epimers of NAD(P)HX, a damaged form of NAD(P)H that is a result of enzymatic or heat-dependent hydration.</text>
</comment>
<comment type="catalytic activity">
    <reaction evidence="1">
        <text>(6S)-NADHX + ATP = ADP + phosphate + NADH + H(+)</text>
        <dbReference type="Rhea" id="RHEA:19017"/>
        <dbReference type="ChEBI" id="CHEBI:15378"/>
        <dbReference type="ChEBI" id="CHEBI:30616"/>
        <dbReference type="ChEBI" id="CHEBI:43474"/>
        <dbReference type="ChEBI" id="CHEBI:57945"/>
        <dbReference type="ChEBI" id="CHEBI:64074"/>
        <dbReference type="ChEBI" id="CHEBI:456216"/>
        <dbReference type="EC" id="4.2.1.93"/>
    </reaction>
</comment>
<comment type="catalytic activity">
    <reaction>
        <text>(6S)-NADPHX + ATP = ADP + phosphate + NADPH + H(+)</text>
        <dbReference type="Rhea" id="RHEA:32231"/>
        <dbReference type="ChEBI" id="CHEBI:15378"/>
        <dbReference type="ChEBI" id="CHEBI:30616"/>
        <dbReference type="ChEBI" id="CHEBI:43474"/>
        <dbReference type="ChEBI" id="CHEBI:57783"/>
        <dbReference type="ChEBI" id="CHEBI:64076"/>
        <dbReference type="ChEBI" id="CHEBI:456216"/>
        <dbReference type="EC" id="4.2.1.93"/>
    </reaction>
</comment>
<comment type="cofactor">
    <cofactor evidence="1">
        <name>Mg(2+)</name>
        <dbReference type="ChEBI" id="CHEBI:18420"/>
    </cofactor>
</comment>
<comment type="subcellular location">
    <subcellularLocation>
        <location evidence="1">Cytoplasm</location>
    </subcellularLocation>
</comment>
<comment type="similarity">
    <text evidence="1">Belongs to the NnrD/CARKD family.</text>
</comment>
<feature type="chain" id="PRO_0000416191" description="ATP-dependent (S)-NAD(P)H-hydrate dehydratase">
    <location>
        <begin position="1"/>
        <end position="350"/>
    </location>
</feature>
<feature type="domain" description="YjeF C-terminal" evidence="1">
    <location>
        <begin position="35"/>
        <end position="342"/>
    </location>
</feature>
<feature type="binding site" evidence="1">
    <location>
        <position position="139"/>
    </location>
    <ligand>
        <name>(6S)-NADPHX</name>
        <dbReference type="ChEBI" id="CHEBI:64076"/>
    </ligand>
</feature>
<feature type="binding site" evidence="1">
    <location>
        <begin position="192"/>
        <end position="198"/>
    </location>
    <ligand>
        <name>(6S)-NADPHX</name>
        <dbReference type="ChEBI" id="CHEBI:64076"/>
    </ligand>
</feature>
<feature type="binding site" evidence="1">
    <location>
        <begin position="230"/>
        <end position="234"/>
    </location>
    <ligand>
        <name>ATP</name>
        <dbReference type="ChEBI" id="CHEBI:30616"/>
    </ligand>
</feature>
<feature type="binding site" evidence="1">
    <location>
        <begin position="249"/>
        <end position="258"/>
    </location>
    <ligand>
        <name>ATP</name>
        <dbReference type="ChEBI" id="CHEBI:30616"/>
    </ligand>
</feature>
<feature type="binding site" evidence="1">
    <location>
        <position position="259"/>
    </location>
    <ligand>
        <name>(6S)-NADPHX</name>
        <dbReference type="ChEBI" id="CHEBI:64076"/>
    </ligand>
</feature>
<reference key="1">
    <citation type="journal article" date="2006" name="Nature">
        <title>Insights from the genome of the biotrophic fungal plant pathogen Ustilago maydis.</title>
        <authorList>
            <person name="Kaemper J."/>
            <person name="Kahmann R."/>
            <person name="Boelker M."/>
            <person name="Ma L.-J."/>
            <person name="Brefort T."/>
            <person name="Saville B.J."/>
            <person name="Banuett F."/>
            <person name="Kronstad J.W."/>
            <person name="Gold S.E."/>
            <person name="Mueller O."/>
            <person name="Perlin M.H."/>
            <person name="Woesten H.A.B."/>
            <person name="de Vries R."/>
            <person name="Ruiz-Herrera J."/>
            <person name="Reynaga-Pena C.G."/>
            <person name="Snetselaar K."/>
            <person name="McCann M."/>
            <person name="Perez-Martin J."/>
            <person name="Feldbruegge M."/>
            <person name="Basse C.W."/>
            <person name="Steinberg G."/>
            <person name="Ibeas J.I."/>
            <person name="Holloman W."/>
            <person name="Guzman P."/>
            <person name="Farman M.L."/>
            <person name="Stajich J.E."/>
            <person name="Sentandreu R."/>
            <person name="Gonzalez-Prieto J.M."/>
            <person name="Kennell J.C."/>
            <person name="Molina L."/>
            <person name="Schirawski J."/>
            <person name="Mendoza-Mendoza A."/>
            <person name="Greilinger D."/>
            <person name="Muench K."/>
            <person name="Roessel N."/>
            <person name="Scherer M."/>
            <person name="Vranes M."/>
            <person name="Ladendorf O."/>
            <person name="Vincon V."/>
            <person name="Fuchs U."/>
            <person name="Sandrock B."/>
            <person name="Meng S."/>
            <person name="Ho E.C.H."/>
            <person name="Cahill M.J."/>
            <person name="Boyce K.J."/>
            <person name="Klose J."/>
            <person name="Klosterman S.J."/>
            <person name="Deelstra H.J."/>
            <person name="Ortiz-Castellanos L."/>
            <person name="Li W."/>
            <person name="Sanchez-Alonso P."/>
            <person name="Schreier P.H."/>
            <person name="Haeuser-Hahn I."/>
            <person name="Vaupel M."/>
            <person name="Koopmann E."/>
            <person name="Friedrich G."/>
            <person name="Voss H."/>
            <person name="Schlueter T."/>
            <person name="Margolis J."/>
            <person name="Platt D."/>
            <person name="Swimmer C."/>
            <person name="Gnirke A."/>
            <person name="Chen F."/>
            <person name="Vysotskaia V."/>
            <person name="Mannhaupt G."/>
            <person name="Gueldener U."/>
            <person name="Muensterkoetter M."/>
            <person name="Haase D."/>
            <person name="Oesterheld M."/>
            <person name="Mewes H.-W."/>
            <person name="Mauceli E.W."/>
            <person name="DeCaprio D."/>
            <person name="Wade C.M."/>
            <person name="Butler J."/>
            <person name="Young S.K."/>
            <person name="Jaffe D.B."/>
            <person name="Calvo S.E."/>
            <person name="Nusbaum C."/>
            <person name="Galagan J.E."/>
            <person name="Birren B.W."/>
        </authorList>
    </citation>
    <scope>NUCLEOTIDE SEQUENCE [LARGE SCALE GENOMIC DNA]</scope>
    <source>
        <strain>DSM 14603 / FGSC 9021 / UM521</strain>
    </source>
</reference>
<reference key="2">
    <citation type="submission" date="2014-09" db="EMBL/GenBank/DDBJ databases">
        <authorList>
            <person name="Gueldener U."/>
            <person name="Muensterkoetter M."/>
            <person name="Walter M.C."/>
            <person name="Mannhaupt G."/>
            <person name="Kahmann R."/>
        </authorList>
    </citation>
    <scope>GENOME REANNOTATION</scope>
    <source>
        <strain>DSM 14603 / FGSC 9021 / UM521</strain>
    </source>
</reference>
<accession>Q4P219</accession>
<accession>A0A0D1DNW2</accession>
<protein>
    <recommendedName>
        <fullName evidence="1">ATP-dependent (S)-NAD(P)H-hydrate dehydratase</fullName>
        <ecNumber evidence="1">4.2.1.93</ecNumber>
    </recommendedName>
    <alternativeName>
        <fullName evidence="1">ATP-dependent NAD(P)HX dehydratase</fullName>
    </alternativeName>
</protein>
<organism>
    <name type="scientific">Mycosarcoma maydis</name>
    <name type="common">Corn smut fungus</name>
    <name type="synonym">Ustilago maydis</name>
    <dbReference type="NCBI Taxonomy" id="5270"/>
    <lineage>
        <taxon>Eukaryota</taxon>
        <taxon>Fungi</taxon>
        <taxon>Dikarya</taxon>
        <taxon>Basidiomycota</taxon>
        <taxon>Ustilaginomycotina</taxon>
        <taxon>Ustilaginomycetes</taxon>
        <taxon>Ustilaginales</taxon>
        <taxon>Ustilaginaceae</taxon>
        <taxon>Mycosarcoma</taxon>
    </lineage>
</organism>
<sequence length="350" mass="37521">MSTSAAPGKLATTLGANVSSLASKVRSTSSTQQSLMQSVKRIIPPLSSAKHKGQAGRIGIVGGSRDYTGAPFFASMSSMRFGCDMSYTICTPEAGNVIKTYSPDLIVNRLLDASVEWSQVERSVDELFARFHAVVIGPGLGRDEFMQKCAKLCIGLARKHDMYLVVDADGLWLLQNEPDLIKGYKKAILTPNVAEFGRLCDTLGIDCKQEPDSAAKKLAQALEGPTVLEKGPVDRITNGKEVLYVDLQGGLKRCGGQGDVLAGCLGTLAGWAKIYQDENPTLPARSTTTDGDLIAEDRLLLLAGYAASVTARTCSRLAFAKSKRAMLADDLLPEVGRAYEELWGDVQALL</sequence>
<evidence type="ECO:0000255" key="1">
    <source>
        <dbReference type="HAMAP-Rule" id="MF_03157"/>
    </source>
</evidence>
<gene>
    <name type="ORF">UMAG_05844</name>
</gene>
<name>NNRD_MYCMD</name>
<proteinExistence type="inferred from homology"/>
<dbReference type="EC" id="4.2.1.93" evidence="1"/>
<dbReference type="EMBL" id="CM003159">
    <property type="protein sequence ID" value="KIS66104.1"/>
    <property type="molecule type" value="Genomic_DNA"/>
</dbReference>
<dbReference type="RefSeq" id="XP_011392207.1">
    <property type="nucleotide sequence ID" value="XM_011393905.1"/>
</dbReference>
<dbReference type="SMR" id="Q4P219"/>
<dbReference type="FunCoup" id="Q4P219">
    <property type="interactions" value="18"/>
</dbReference>
<dbReference type="STRING" id="237631.Q4P219"/>
<dbReference type="EnsemblFungi" id="KIS66104">
    <property type="protein sequence ID" value="KIS66104"/>
    <property type="gene ID" value="UMAG_05844"/>
</dbReference>
<dbReference type="GeneID" id="23565621"/>
<dbReference type="KEGG" id="uma:UMAG_05844"/>
<dbReference type="VEuPathDB" id="FungiDB:UMAG_05844"/>
<dbReference type="eggNOG" id="KOG3974">
    <property type="taxonomic scope" value="Eukaryota"/>
</dbReference>
<dbReference type="HOGENOM" id="CLU_030651_3_0_1"/>
<dbReference type="InParanoid" id="Q4P219"/>
<dbReference type="OMA" id="WRAAYHN"/>
<dbReference type="OrthoDB" id="8110916at2759"/>
<dbReference type="Proteomes" id="UP000000561">
    <property type="component" value="Chromosome 20"/>
</dbReference>
<dbReference type="GO" id="GO:0005737">
    <property type="term" value="C:cytoplasm"/>
    <property type="evidence" value="ECO:0007669"/>
    <property type="project" value="UniProtKB-SubCell"/>
</dbReference>
<dbReference type="GO" id="GO:0005524">
    <property type="term" value="F:ATP binding"/>
    <property type="evidence" value="ECO:0007669"/>
    <property type="project" value="UniProtKB-KW"/>
</dbReference>
<dbReference type="GO" id="GO:0047453">
    <property type="term" value="F:ATP-dependent NAD(P)H-hydrate dehydratase activity"/>
    <property type="evidence" value="ECO:0000318"/>
    <property type="project" value="GO_Central"/>
</dbReference>
<dbReference type="GO" id="GO:0110051">
    <property type="term" value="P:metabolite repair"/>
    <property type="evidence" value="ECO:0000318"/>
    <property type="project" value="GO_Central"/>
</dbReference>
<dbReference type="GO" id="GO:0046496">
    <property type="term" value="P:nicotinamide nucleotide metabolic process"/>
    <property type="evidence" value="ECO:0007669"/>
    <property type="project" value="UniProtKB-UniRule"/>
</dbReference>
<dbReference type="CDD" id="cd01171">
    <property type="entry name" value="YXKO-related"/>
    <property type="match status" value="1"/>
</dbReference>
<dbReference type="FunFam" id="3.40.1190.20:FF:000023">
    <property type="entry name" value="ATP-dependent (S)-NAD(P)H-hydrate dehydratase"/>
    <property type="match status" value="1"/>
</dbReference>
<dbReference type="Gene3D" id="3.40.1190.20">
    <property type="match status" value="1"/>
</dbReference>
<dbReference type="HAMAP" id="MF_01965">
    <property type="entry name" value="NADHX_dehydratase"/>
    <property type="match status" value="1"/>
</dbReference>
<dbReference type="InterPro" id="IPR017953">
    <property type="entry name" value="Carbohydrate_kinase_pred_CS"/>
</dbReference>
<dbReference type="InterPro" id="IPR000631">
    <property type="entry name" value="CARKD"/>
</dbReference>
<dbReference type="InterPro" id="IPR029056">
    <property type="entry name" value="Ribokinase-like"/>
</dbReference>
<dbReference type="NCBIfam" id="TIGR00196">
    <property type="entry name" value="yjeF_cterm"/>
    <property type="match status" value="1"/>
</dbReference>
<dbReference type="PANTHER" id="PTHR12592:SF0">
    <property type="entry name" value="ATP-DEPENDENT (S)-NAD(P)H-HYDRATE DEHYDRATASE"/>
    <property type="match status" value="1"/>
</dbReference>
<dbReference type="PANTHER" id="PTHR12592">
    <property type="entry name" value="ATP-DEPENDENT (S)-NAD(P)H-HYDRATE DEHYDRATASE FAMILY MEMBER"/>
    <property type="match status" value="1"/>
</dbReference>
<dbReference type="Pfam" id="PF01256">
    <property type="entry name" value="Carb_kinase"/>
    <property type="match status" value="1"/>
</dbReference>
<dbReference type="SUPFAM" id="SSF53613">
    <property type="entry name" value="Ribokinase-like"/>
    <property type="match status" value="1"/>
</dbReference>
<dbReference type="PROSITE" id="PS01049">
    <property type="entry name" value="YJEF_C_1"/>
    <property type="match status" value="1"/>
</dbReference>
<dbReference type="PROSITE" id="PS01050">
    <property type="entry name" value="YJEF_C_2"/>
    <property type="match status" value="1"/>
</dbReference>
<dbReference type="PROSITE" id="PS51383">
    <property type="entry name" value="YJEF_C_3"/>
    <property type="match status" value="1"/>
</dbReference>